<accession>O02824</accession>
<name>ADA1A_RABIT</name>
<sequence length="466" mass="51365">MVFLSGNASDSSNCTHPPAPVNISKAILLGVILGGLILFGVLGNILVILSVACHRHLHSVTHYYIVNLAVADLLLTSTVLPFSAIFEILGYWAFGRVFCNIWAAVDVLCCTASIISLCVISIDRYIGVSYPLRYPTIVTQRRGLRALLCVWAFSLVISVGPLFGWRQPAPDDETICQINEEPGYVLFSALGSFYVPLTIILAMYCRVYVVAKRESRGLKSGLKTDKSDSEQVTLRIHRKNAPAGGSGVASAKNKTHFSVRLLKFSREKKAAKTLGIVVGCFVLCWLPFFLVMPIGSFFPDFKPPETVFKIVFWLGYLNSCINPIIYPCSSQEFKKAFQNVLKIQCLRRKQSSKHALGYTLHAPSQALEGQHKDMVRIPVGSGETFYKISKTDGVCEWKFFSSMPRGSARITVPKDQSACTTARVRSKSFLQVCCCVGPSTPNPGENHQVPTIKIHTISLSENGEEV</sequence>
<organism>
    <name type="scientific">Oryctolagus cuniculus</name>
    <name type="common">Rabbit</name>
    <dbReference type="NCBI Taxonomy" id="9986"/>
    <lineage>
        <taxon>Eukaryota</taxon>
        <taxon>Metazoa</taxon>
        <taxon>Chordata</taxon>
        <taxon>Craniata</taxon>
        <taxon>Vertebrata</taxon>
        <taxon>Euteleostomi</taxon>
        <taxon>Mammalia</taxon>
        <taxon>Eutheria</taxon>
        <taxon>Euarchontoglires</taxon>
        <taxon>Glires</taxon>
        <taxon>Lagomorpha</taxon>
        <taxon>Leporidae</taxon>
        <taxon>Oryctolagus</taxon>
    </lineage>
</organism>
<proteinExistence type="evidence at transcript level"/>
<evidence type="ECO:0000250" key="1"/>
<evidence type="ECO:0000250" key="2">
    <source>
        <dbReference type="UniProtKB" id="P35348"/>
    </source>
</evidence>
<evidence type="ECO:0000255" key="3"/>
<evidence type="ECO:0000255" key="4">
    <source>
        <dbReference type="PROSITE-ProRule" id="PRU00521"/>
    </source>
</evidence>
<keyword id="KW-1003">Cell membrane</keyword>
<keyword id="KW-0963">Cytoplasm</keyword>
<keyword id="KW-0297">G-protein coupled receptor</keyword>
<keyword id="KW-0325">Glycoprotein</keyword>
<keyword id="KW-0449">Lipoprotein</keyword>
<keyword id="KW-0472">Membrane</keyword>
<keyword id="KW-0539">Nucleus</keyword>
<keyword id="KW-0564">Palmitate</keyword>
<keyword id="KW-0675">Receptor</keyword>
<keyword id="KW-1185">Reference proteome</keyword>
<keyword id="KW-0807">Transducer</keyword>
<keyword id="KW-0812">Transmembrane</keyword>
<keyword id="KW-1133">Transmembrane helix</keyword>
<reference key="1">
    <citation type="journal article" date="1997" name="Life Sci.">
        <title>Cloning, functional expression and tissue distribution of rabbit alpha1a-adrenoceptor.</title>
        <authorList>
            <person name="Miyamoto S."/>
            <person name="Taniguchi T."/>
            <person name="Suzuki F."/>
            <person name="Takita M."/>
            <person name="Kosaka N."/>
            <person name="Negoro E."/>
            <person name="Okuda T."/>
            <person name="Kosaka H."/>
            <person name="Murata S."/>
            <person name="Nakamura S."/>
            <person name="Akagi Y."/>
            <person name="Oshita M."/>
            <person name="Watanabe Y."/>
            <person name="Muramatsu I."/>
        </authorList>
    </citation>
    <scope>NUCLEOTIDE SEQUENCE [MRNA]</scope>
</reference>
<dbReference type="EMBL" id="U81982">
    <property type="protein sequence ID" value="AAB61334.1"/>
    <property type="molecule type" value="mRNA"/>
</dbReference>
<dbReference type="RefSeq" id="NP_001075849.1">
    <property type="nucleotide sequence ID" value="NM_001082380.1"/>
</dbReference>
<dbReference type="RefSeq" id="XP_051684617.1">
    <property type="nucleotide sequence ID" value="XM_051828657.2"/>
</dbReference>
<dbReference type="RefSeq" id="XP_051684618.1">
    <property type="nucleotide sequence ID" value="XM_051828658.2"/>
</dbReference>
<dbReference type="RefSeq" id="XP_069923997.1">
    <property type="nucleotide sequence ID" value="XM_070067896.1"/>
</dbReference>
<dbReference type="SMR" id="O02824"/>
<dbReference type="FunCoup" id="O02824">
    <property type="interactions" value="246"/>
</dbReference>
<dbReference type="STRING" id="9986.ENSOCUP00000028378"/>
<dbReference type="BindingDB" id="O02824"/>
<dbReference type="ChEMBL" id="CHEMBL3637"/>
<dbReference type="GlyCosmos" id="O02824">
    <property type="glycosylation" value="3 sites, No reported glycans"/>
</dbReference>
<dbReference type="PaxDb" id="9986-ENSOCUP00000018013"/>
<dbReference type="Ensembl" id="ENSOCUT00000023786.2">
    <property type="protein sequence ID" value="ENSOCUP00000018013.2"/>
    <property type="gene ID" value="ENSOCUG00000000775.4"/>
</dbReference>
<dbReference type="Ensembl" id="ENSOCUT00000035932.1">
    <property type="protein sequence ID" value="ENSOCUP00000028378.1"/>
    <property type="gene ID" value="ENSOCUG00000000775.4"/>
</dbReference>
<dbReference type="GeneID" id="100009237"/>
<dbReference type="KEGG" id="ocu:100009237"/>
<dbReference type="CTD" id="148"/>
<dbReference type="eggNOG" id="KOG3656">
    <property type="taxonomic scope" value="Eukaryota"/>
</dbReference>
<dbReference type="GeneTree" id="ENSGT00940000159105"/>
<dbReference type="InParanoid" id="O02824"/>
<dbReference type="OrthoDB" id="6358729at2759"/>
<dbReference type="PRO" id="PR:O02824"/>
<dbReference type="Proteomes" id="UP000001811">
    <property type="component" value="Chromosome 2"/>
</dbReference>
<dbReference type="Bgee" id="ENSOCUG00000000775">
    <property type="expression patterns" value="Expressed in liver and 14 other cell types or tissues"/>
</dbReference>
<dbReference type="ExpressionAtlas" id="O02824">
    <property type="expression patterns" value="baseline"/>
</dbReference>
<dbReference type="GO" id="GO:0005901">
    <property type="term" value="C:caveola"/>
    <property type="evidence" value="ECO:0007669"/>
    <property type="project" value="UniProtKB-SubCell"/>
</dbReference>
<dbReference type="GO" id="GO:0005737">
    <property type="term" value="C:cytoplasm"/>
    <property type="evidence" value="ECO:0000250"/>
    <property type="project" value="UniProtKB"/>
</dbReference>
<dbReference type="GO" id="GO:0005829">
    <property type="term" value="C:cytosol"/>
    <property type="evidence" value="ECO:0007669"/>
    <property type="project" value="Ensembl"/>
</dbReference>
<dbReference type="GO" id="GO:0031965">
    <property type="term" value="C:nuclear membrane"/>
    <property type="evidence" value="ECO:0000250"/>
    <property type="project" value="UniProtKB"/>
</dbReference>
<dbReference type="GO" id="GO:0005654">
    <property type="term" value="C:nucleoplasm"/>
    <property type="evidence" value="ECO:0007669"/>
    <property type="project" value="Ensembl"/>
</dbReference>
<dbReference type="GO" id="GO:0005634">
    <property type="term" value="C:nucleus"/>
    <property type="evidence" value="ECO:0000250"/>
    <property type="project" value="UniProtKB"/>
</dbReference>
<dbReference type="GO" id="GO:0005886">
    <property type="term" value="C:plasma membrane"/>
    <property type="evidence" value="ECO:0000250"/>
    <property type="project" value="UniProtKB"/>
</dbReference>
<dbReference type="GO" id="GO:0004937">
    <property type="term" value="F:alpha1-adrenergic receptor activity"/>
    <property type="evidence" value="ECO:0007669"/>
    <property type="project" value="Ensembl"/>
</dbReference>
<dbReference type="GO" id="GO:0046982">
    <property type="term" value="F:protein heterodimerization activity"/>
    <property type="evidence" value="ECO:0000250"/>
    <property type="project" value="UniProtKB"/>
</dbReference>
<dbReference type="GO" id="GO:0071880">
    <property type="term" value="P:adenylate cyclase-activating adrenergic receptor signaling pathway"/>
    <property type="evidence" value="ECO:0007669"/>
    <property type="project" value="TreeGrafter"/>
</dbReference>
<dbReference type="GO" id="GO:0007512">
    <property type="term" value="P:adult heart development"/>
    <property type="evidence" value="ECO:0007669"/>
    <property type="project" value="Ensembl"/>
</dbReference>
<dbReference type="GO" id="GO:0061049">
    <property type="term" value="P:cell growth involved in cardiac muscle cell development"/>
    <property type="evidence" value="ECO:0007669"/>
    <property type="project" value="Ensembl"/>
</dbReference>
<dbReference type="GO" id="GO:0000165">
    <property type="term" value="P:MAPK cascade"/>
    <property type="evidence" value="ECO:0007669"/>
    <property type="project" value="Ensembl"/>
</dbReference>
<dbReference type="GO" id="GO:0010507">
    <property type="term" value="P:negative regulation of autophagy"/>
    <property type="evidence" value="ECO:0007669"/>
    <property type="project" value="Ensembl"/>
</dbReference>
<dbReference type="GO" id="GO:0001985">
    <property type="term" value="P:negative regulation of heart rate involved in baroreceptor response to increased systemic arterial blood pressure"/>
    <property type="evidence" value="ECO:0007669"/>
    <property type="project" value="Ensembl"/>
</dbReference>
<dbReference type="GO" id="GO:0150099">
    <property type="term" value="P:neuron-glial cell signaling"/>
    <property type="evidence" value="ECO:0007669"/>
    <property type="project" value="Ensembl"/>
</dbReference>
<dbReference type="GO" id="GO:0001994">
    <property type="term" value="P:norepinephrine-epinephrine vasoconstriction involved in regulation of systemic arterial blood pressure"/>
    <property type="evidence" value="ECO:0007669"/>
    <property type="project" value="Ensembl"/>
</dbReference>
<dbReference type="GO" id="GO:0007200">
    <property type="term" value="P:phospholipase C-activating G protein-coupled receptor signaling pathway"/>
    <property type="evidence" value="ECO:0007669"/>
    <property type="project" value="Ensembl"/>
</dbReference>
<dbReference type="GO" id="GO:0097195">
    <property type="term" value="P:pilomotor reflex"/>
    <property type="evidence" value="ECO:0007669"/>
    <property type="project" value="Ensembl"/>
</dbReference>
<dbReference type="GO" id="GO:0010613">
    <property type="term" value="P:positive regulation of cardiac muscle hypertrophy"/>
    <property type="evidence" value="ECO:0007669"/>
    <property type="project" value="Ensembl"/>
</dbReference>
<dbReference type="GO" id="GO:0007204">
    <property type="term" value="P:positive regulation of cytosolic calcium ion concentration"/>
    <property type="evidence" value="ECO:0007669"/>
    <property type="project" value="TreeGrafter"/>
</dbReference>
<dbReference type="GO" id="GO:0001996">
    <property type="term" value="P:positive regulation of heart rate by epinephrine-norepinephrine"/>
    <property type="evidence" value="ECO:0007669"/>
    <property type="project" value="Ensembl"/>
</dbReference>
<dbReference type="GO" id="GO:0043410">
    <property type="term" value="P:positive regulation of MAPK cascade"/>
    <property type="evidence" value="ECO:0000250"/>
    <property type="project" value="UniProtKB"/>
</dbReference>
<dbReference type="GO" id="GO:0045987">
    <property type="term" value="P:positive regulation of smooth muscle contraction"/>
    <property type="evidence" value="ECO:0007669"/>
    <property type="project" value="Ensembl"/>
</dbReference>
<dbReference type="GO" id="GO:0001997">
    <property type="term" value="P:positive regulation of the force of heart contraction by epinephrine-norepinephrine"/>
    <property type="evidence" value="ECO:0007669"/>
    <property type="project" value="Ensembl"/>
</dbReference>
<dbReference type="GO" id="GO:0055117">
    <property type="term" value="P:regulation of cardiac muscle contraction"/>
    <property type="evidence" value="ECO:0007669"/>
    <property type="project" value="InterPro"/>
</dbReference>
<dbReference type="GO" id="GO:0019229">
    <property type="term" value="P:regulation of vasoconstriction"/>
    <property type="evidence" value="ECO:0007669"/>
    <property type="project" value="InterPro"/>
</dbReference>
<dbReference type="CDD" id="cd15325">
    <property type="entry name" value="7tmA_alpha1A_AR"/>
    <property type="match status" value="1"/>
</dbReference>
<dbReference type="FunFam" id="1.20.1070.10:FF:000027">
    <property type="entry name" value="alpha-1A adrenergic receptor"/>
    <property type="match status" value="1"/>
</dbReference>
<dbReference type="Gene3D" id="1.20.1070.10">
    <property type="entry name" value="Rhodopsin 7-helix transmembrane proteins"/>
    <property type="match status" value="1"/>
</dbReference>
<dbReference type="InterPro" id="IPR002233">
    <property type="entry name" value="ADR_fam"/>
</dbReference>
<dbReference type="InterPro" id="IPR001004">
    <property type="entry name" value="ADRA1A_rcpt"/>
</dbReference>
<dbReference type="InterPro" id="IPR000276">
    <property type="entry name" value="GPCR_Rhodpsn"/>
</dbReference>
<dbReference type="InterPro" id="IPR017452">
    <property type="entry name" value="GPCR_Rhodpsn_7TM"/>
</dbReference>
<dbReference type="PANTHER" id="PTHR24248">
    <property type="entry name" value="ADRENERGIC RECEPTOR-RELATED G-PROTEIN COUPLED RECEPTOR"/>
    <property type="match status" value="1"/>
</dbReference>
<dbReference type="PANTHER" id="PTHR24248:SF16">
    <property type="entry name" value="ALPHA-1A ADRENERGIC RECEPTOR"/>
    <property type="match status" value="1"/>
</dbReference>
<dbReference type="Pfam" id="PF00001">
    <property type="entry name" value="7tm_1"/>
    <property type="match status" value="1"/>
</dbReference>
<dbReference type="PRINTS" id="PR01103">
    <property type="entry name" value="ADRENERGICR"/>
</dbReference>
<dbReference type="PRINTS" id="PR00557">
    <property type="entry name" value="ADRENRGCA1AR"/>
</dbReference>
<dbReference type="PRINTS" id="PR00237">
    <property type="entry name" value="GPCRRHODOPSN"/>
</dbReference>
<dbReference type="SMART" id="SM01381">
    <property type="entry name" value="7TM_GPCR_Srsx"/>
    <property type="match status" value="1"/>
</dbReference>
<dbReference type="SUPFAM" id="SSF81321">
    <property type="entry name" value="Family A G protein-coupled receptor-like"/>
    <property type="match status" value="1"/>
</dbReference>
<dbReference type="PROSITE" id="PS00237">
    <property type="entry name" value="G_PROTEIN_RECEP_F1_1"/>
    <property type="match status" value="1"/>
</dbReference>
<dbReference type="PROSITE" id="PS50262">
    <property type="entry name" value="G_PROTEIN_RECEP_F1_2"/>
    <property type="match status" value="1"/>
</dbReference>
<comment type="function">
    <text evidence="1">This alpha-adrenergic receptor mediates its action by association with G proteins that activate a phosphatidylinositol-calcium second messenger system. Its effect is mediated by G(q) and G(11) proteins. Nuclear ADRA1A-ADRA1B heterooligomers regulate phenylephrine (PE)-stimulated ERK signaling in cardiac myocytes (By similarity).</text>
</comment>
<comment type="subunit">
    <text evidence="2">Homo- and heterooligomer. Heterooligomerizes with ADRA1B homooligomers in cardiac myocytes. Interacts with CAVIN4.</text>
</comment>
<comment type="subcellular location">
    <subcellularLocation>
        <location>Nucleus membrane</location>
        <topology>Multi-pass membrane protein</topology>
    </subcellularLocation>
    <subcellularLocation>
        <location evidence="2">Cell membrane</location>
        <topology evidence="3">Multi-pass membrane protein</topology>
    </subcellularLocation>
    <subcellularLocation>
        <location evidence="2">Cytoplasm</location>
    </subcellularLocation>
    <subcellularLocation>
        <location evidence="2">Membrane</location>
        <location evidence="2">Caveola</location>
    </subcellularLocation>
    <text evidence="1">Location at the nuclear membrane facilitates heterooligomerization and regulates ERK-mediated signaling in cardiac myocytes. Colocalizes with GNAQ, PLCB1 as well as LAP2 at the nuclear membrane of cardiac myocytes (By similarity).</text>
</comment>
<comment type="tissue specificity">
    <text>Abundant in liver, vas deferens, brain, and aorta, but not in heart.</text>
</comment>
<comment type="similarity">
    <text evidence="4">Belongs to the G-protein coupled receptor 1 family. Adrenergic receptor subfamily. ADRA1A sub-subfamily.</text>
</comment>
<protein>
    <recommendedName>
        <fullName>Alpha-1A adrenergic receptor</fullName>
    </recommendedName>
    <alternativeName>
        <fullName>Alpha-1A adrenoreceptor</fullName>
        <shortName>Alpha-1A adrenoceptor</shortName>
    </alternativeName>
    <alternativeName>
        <fullName>Alpha-1C adrenergic receptor</fullName>
    </alternativeName>
</protein>
<feature type="chain" id="PRO_0000069065" description="Alpha-1A adrenergic receptor">
    <location>
        <begin position="1"/>
        <end position="466"/>
    </location>
</feature>
<feature type="topological domain" description="Extracellular" evidence="1">
    <location>
        <begin position="1"/>
        <end position="25"/>
    </location>
</feature>
<feature type="transmembrane region" description="Helical; Name=1" evidence="1">
    <location>
        <begin position="26"/>
        <end position="51"/>
    </location>
</feature>
<feature type="topological domain" description="Cytoplasmic" evidence="1">
    <location>
        <begin position="52"/>
        <end position="63"/>
    </location>
</feature>
<feature type="transmembrane region" description="Helical; Name=2" evidence="1">
    <location>
        <begin position="64"/>
        <end position="89"/>
    </location>
</feature>
<feature type="topological domain" description="Extracellular" evidence="1">
    <location>
        <begin position="90"/>
        <end position="99"/>
    </location>
</feature>
<feature type="transmembrane region" description="Helical; Name=3" evidence="1">
    <location>
        <begin position="100"/>
        <end position="122"/>
    </location>
</feature>
<feature type="topological domain" description="Cytoplasmic" evidence="1">
    <location>
        <begin position="123"/>
        <end position="143"/>
    </location>
</feature>
<feature type="transmembrane region" description="Helical; Name=4" evidence="1">
    <location>
        <begin position="144"/>
        <end position="168"/>
    </location>
</feature>
<feature type="topological domain" description="Extracellular" evidence="1">
    <location>
        <begin position="169"/>
        <end position="181"/>
    </location>
</feature>
<feature type="transmembrane region" description="Helical; Name=5" evidence="1">
    <location>
        <begin position="182"/>
        <end position="205"/>
    </location>
</feature>
<feature type="topological domain" description="Cytoplasmic" evidence="1">
    <location>
        <begin position="206"/>
        <end position="272"/>
    </location>
</feature>
<feature type="transmembrane region" description="Helical; Name=6" evidence="1">
    <location>
        <begin position="273"/>
        <end position="297"/>
    </location>
</feature>
<feature type="topological domain" description="Extracellular" evidence="1">
    <location>
        <begin position="298"/>
        <end position="304"/>
    </location>
</feature>
<feature type="transmembrane region" description="Helical; Name=7" evidence="1">
    <location>
        <begin position="305"/>
        <end position="329"/>
    </location>
</feature>
<feature type="topological domain" description="Cytoplasmic" evidence="1">
    <location>
        <begin position="330"/>
        <end position="466"/>
    </location>
</feature>
<feature type="short sequence motif" description="Nuclear localization signal" evidence="1">
    <location>
        <begin position="334"/>
        <end position="349"/>
    </location>
</feature>
<feature type="lipid moiety-binding region" description="S-palmitoyl cysteine" evidence="3">
    <location>
        <position position="345"/>
    </location>
</feature>
<feature type="glycosylation site" description="N-linked (GlcNAc...) asparagine" evidence="3">
    <location>
        <position position="7"/>
    </location>
</feature>
<feature type="glycosylation site" description="N-linked (GlcNAc...) asparagine" evidence="3">
    <location>
        <position position="13"/>
    </location>
</feature>
<feature type="glycosylation site" description="N-linked (GlcNAc...) asparagine" evidence="3">
    <location>
        <position position="22"/>
    </location>
</feature>
<gene>
    <name type="primary">ADRA1A</name>
    <name type="synonym">ADRA1C</name>
</gene>